<feature type="chain" id="PRO_1000128064" description="Small ribosomal subunit protein uS19">
    <location>
        <begin position="1"/>
        <end position="92"/>
    </location>
</feature>
<comment type="function">
    <text evidence="1">Protein S19 forms a complex with S13 that binds strongly to the 16S ribosomal RNA.</text>
</comment>
<comment type="similarity">
    <text evidence="1">Belongs to the universal ribosomal protein uS19 family.</text>
</comment>
<dbReference type="EMBL" id="CP000901">
    <property type="protein sequence ID" value="ABX86955.1"/>
    <property type="molecule type" value="Genomic_DNA"/>
</dbReference>
<dbReference type="RefSeq" id="WP_002213430.1">
    <property type="nucleotide sequence ID" value="NZ_CP009935.1"/>
</dbReference>
<dbReference type="SMR" id="A9R900"/>
<dbReference type="GeneID" id="97454235"/>
<dbReference type="KEGG" id="ypg:YpAngola_A0588"/>
<dbReference type="PATRIC" id="fig|349746.12.peg.1537"/>
<dbReference type="GO" id="GO:0005737">
    <property type="term" value="C:cytoplasm"/>
    <property type="evidence" value="ECO:0007669"/>
    <property type="project" value="UniProtKB-ARBA"/>
</dbReference>
<dbReference type="GO" id="GO:0015935">
    <property type="term" value="C:small ribosomal subunit"/>
    <property type="evidence" value="ECO:0007669"/>
    <property type="project" value="InterPro"/>
</dbReference>
<dbReference type="GO" id="GO:0019843">
    <property type="term" value="F:rRNA binding"/>
    <property type="evidence" value="ECO:0007669"/>
    <property type="project" value="UniProtKB-UniRule"/>
</dbReference>
<dbReference type="GO" id="GO:0003735">
    <property type="term" value="F:structural constituent of ribosome"/>
    <property type="evidence" value="ECO:0007669"/>
    <property type="project" value="InterPro"/>
</dbReference>
<dbReference type="GO" id="GO:0000028">
    <property type="term" value="P:ribosomal small subunit assembly"/>
    <property type="evidence" value="ECO:0007669"/>
    <property type="project" value="TreeGrafter"/>
</dbReference>
<dbReference type="GO" id="GO:0006412">
    <property type="term" value="P:translation"/>
    <property type="evidence" value="ECO:0007669"/>
    <property type="project" value="UniProtKB-UniRule"/>
</dbReference>
<dbReference type="FunFam" id="3.30.860.10:FF:000001">
    <property type="entry name" value="30S ribosomal protein S19"/>
    <property type="match status" value="1"/>
</dbReference>
<dbReference type="Gene3D" id="3.30.860.10">
    <property type="entry name" value="30s Ribosomal Protein S19, Chain A"/>
    <property type="match status" value="1"/>
</dbReference>
<dbReference type="HAMAP" id="MF_00531">
    <property type="entry name" value="Ribosomal_uS19"/>
    <property type="match status" value="1"/>
</dbReference>
<dbReference type="InterPro" id="IPR002222">
    <property type="entry name" value="Ribosomal_uS19"/>
</dbReference>
<dbReference type="InterPro" id="IPR005732">
    <property type="entry name" value="Ribosomal_uS19_bac-type"/>
</dbReference>
<dbReference type="InterPro" id="IPR020934">
    <property type="entry name" value="Ribosomal_uS19_CS"/>
</dbReference>
<dbReference type="InterPro" id="IPR023575">
    <property type="entry name" value="Ribosomal_uS19_SF"/>
</dbReference>
<dbReference type="NCBIfam" id="TIGR01050">
    <property type="entry name" value="rpsS_bact"/>
    <property type="match status" value="1"/>
</dbReference>
<dbReference type="PANTHER" id="PTHR11880">
    <property type="entry name" value="RIBOSOMAL PROTEIN S19P FAMILY MEMBER"/>
    <property type="match status" value="1"/>
</dbReference>
<dbReference type="PANTHER" id="PTHR11880:SF8">
    <property type="entry name" value="SMALL RIBOSOMAL SUBUNIT PROTEIN US19M"/>
    <property type="match status" value="1"/>
</dbReference>
<dbReference type="Pfam" id="PF00203">
    <property type="entry name" value="Ribosomal_S19"/>
    <property type="match status" value="1"/>
</dbReference>
<dbReference type="PIRSF" id="PIRSF002144">
    <property type="entry name" value="Ribosomal_S19"/>
    <property type="match status" value="1"/>
</dbReference>
<dbReference type="PRINTS" id="PR00975">
    <property type="entry name" value="RIBOSOMALS19"/>
</dbReference>
<dbReference type="SUPFAM" id="SSF54570">
    <property type="entry name" value="Ribosomal protein S19"/>
    <property type="match status" value="1"/>
</dbReference>
<dbReference type="PROSITE" id="PS00323">
    <property type="entry name" value="RIBOSOMAL_S19"/>
    <property type="match status" value="1"/>
</dbReference>
<protein>
    <recommendedName>
        <fullName evidence="1">Small ribosomal subunit protein uS19</fullName>
    </recommendedName>
    <alternativeName>
        <fullName evidence="2">30S ribosomal protein S19</fullName>
    </alternativeName>
</protein>
<organism>
    <name type="scientific">Yersinia pestis bv. Antiqua (strain Angola)</name>
    <dbReference type="NCBI Taxonomy" id="349746"/>
    <lineage>
        <taxon>Bacteria</taxon>
        <taxon>Pseudomonadati</taxon>
        <taxon>Pseudomonadota</taxon>
        <taxon>Gammaproteobacteria</taxon>
        <taxon>Enterobacterales</taxon>
        <taxon>Yersiniaceae</taxon>
        <taxon>Yersinia</taxon>
    </lineage>
</organism>
<proteinExistence type="inferred from homology"/>
<evidence type="ECO:0000255" key="1">
    <source>
        <dbReference type="HAMAP-Rule" id="MF_00531"/>
    </source>
</evidence>
<evidence type="ECO:0000305" key="2"/>
<accession>A9R900</accession>
<keyword id="KW-0687">Ribonucleoprotein</keyword>
<keyword id="KW-0689">Ribosomal protein</keyword>
<keyword id="KW-0694">RNA-binding</keyword>
<keyword id="KW-0699">rRNA-binding</keyword>
<sequence>MPRSLKKGPFIDLHLLKKVEKAVESGDKKPIRTWSRRSTVFPNMIGLTIAVHNGRQHVPVFVSDEMVGHKLGEFAPTRTYRGHAADKKAKKR</sequence>
<reference key="1">
    <citation type="journal article" date="2010" name="J. Bacteriol.">
        <title>Genome sequence of the deep-rooted Yersinia pestis strain Angola reveals new insights into the evolution and pangenome of the plague bacterium.</title>
        <authorList>
            <person name="Eppinger M."/>
            <person name="Worsham P.L."/>
            <person name="Nikolich M.P."/>
            <person name="Riley D.R."/>
            <person name="Sebastian Y."/>
            <person name="Mou S."/>
            <person name="Achtman M."/>
            <person name="Lindler L.E."/>
            <person name="Ravel J."/>
        </authorList>
    </citation>
    <scope>NUCLEOTIDE SEQUENCE [LARGE SCALE GENOMIC DNA]</scope>
    <source>
        <strain>Angola</strain>
    </source>
</reference>
<name>RS19_YERPG</name>
<gene>
    <name evidence="1" type="primary">rpsS</name>
    <name type="ordered locus">YpAngola_A0588</name>
</gene>